<feature type="transit peptide" description="Mitochondrion">
    <location>
        <begin position="1"/>
        <end status="unknown"/>
    </location>
</feature>
<feature type="chain" id="PRO_0000001235" description="5-aminolevulinate synthase, mitochondrial">
    <location>
        <begin status="unknown"/>
        <end position="621"/>
    </location>
</feature>
<feature type="region of interest" description="Disordered" evidence="3">
    <location>
        <begin position="76"/>
        <end position="95"/>
    </location>
</feature>
<feature type="active site" evidence="2">
    <location>
        <position position="362"/>
    </location>
</feature>
<feature type="binding site" evidence="2">
    <location>
        <position position="122"/>
    </location>
    <ligand>
        <name>substrate</name>
    </ligand>
</feature>
<feature type="binding site" evidence="2">
    <location>
        <position position="234"/>
    </location>
    <ligand>
        <name>substrate</name>
    </ligand>
</feature>
<feature type="binding site" description="in other chain" evidence="2">
    <location>
        <position position="286"/>
    </location>
    <ligand>
        <name>pyridoxal 5'-phosphate</name>
        <dbReference type="ChEBI" id="CHEBI:597326"/>
        <note>ligand shared between dimeric partners</note>
    </ligand>
</feature>
<feature type="binding site" description="in other chain" evidence="2">
    <location>
        <position position="314"/>
    </location>
    <ligand>
        <name>pyridoxal 5'-phosphate</name>
        <dbReference type="ChEBI" id="CHEBI:597326"/>
        <note>ligand shared between dimeric partners</note>
    </ligand>
</feature>
<feature type="binding site" description="in other chain" evidence="2">
    <location>
        <position position="359"/>
    </location>
    <ligand>
        <name>pyridoxal 5'-phosphate</name>
        <dbReference type="ChEBI" id="CHEBI:597326"/>
        <note>ligand shared between dimeric partners</note>
    </ligand>
</feature>
<feature type="binding site" evidence="2">
    <location>
        <position position="391"/>
    </location>
    <ligand>
        <name>pyridoxal 5'-phosphate</name>
        <dbReference type="ChEBI" id="CHEBI:597326"/>
        <note>ligand shared between dimeric partners</note>
    </ligand>
</feature>
<feature type="binding site" evidence="2">
    <location>
        <position position="392"/>
    </location>
    <ligand>
        <name>pyridoxal 5'-phosphate</name>
        <dbReference type="ChEBI" id="CHEBI:597326"/>
        <note>ligand shared between dimeric partners</note>
    </ligand>
</feature>
<feature type="binding site" evidence="2">
    <location>
        <position position="477"/>
    </location>
    <ligand>
        <name>substrate</name>
    </ligand>
</feature>
<feature type="modified residue" description="N6-(pyridoxal phosphate)lysine" evidence="2">
    <location>
        <position position="362"/>
    </location>
</feature>
<protein>
    <recommendedName>
        <fullName>5-aminolevulinate synthase, mitochondrial</fullName>
        <ecNumber>2.3.1.37</ecNumber>
    </recommendedName>
    <alternativeName>
        <fullName>5-aminolevulinic acid synthase</fullName>
    </alternativeName>
    <alternativeName>
        <fullName>Delta-ALA synthase</fullName>
    </alternativeName>
    <alternativeName>
        <fullName>Delta-aminolevulinate synthase</fullName>
    </alternativeName>
</protein>
<dbReference type="EC" id="2.3.1.37"/>
<dbReference type="EMBL" id="Z50096">
    <property type="protein sequence ID" value="CAA90424.1"/>
    <property type="molecule type" value="mRNA"/>
</dbReference>
<dbReference type="SMR" id="Q92403"/>
<dbReference type="UniPathway" id="UPA00251">
    <property type="reaction ID" value="UER00375"/>
</dbReference>
<dbReference type="GO" id="GO:0005759">
    <property type="term" value="C:mitochondrial matrix"/>
    <property type="evidence" value="ECO:0007669"/>
    <property type="project" value="UniProtKB-SubCell"/>
</dbReference>
<dbReference type="GO" id="GO:0003870">
    <property type="term" value="F:5-aminolevulinate synthase activity"/>
    <property type="evidence" value="ECO:0007669"/>
    <property type="project" value="UniProtKB-EC"/>
</dbReference>
<dbReference type="GO" id="GO:0030170">
    <property type="term" value="F:pyridoxal phosphate binding"/>
    <property type="evidence" value="ECO:0007669"/>
    <property type="project" value="InterPro"/>
</dbReference>
<dbReference type="GO" id="GO:0006782">
    <property type="term" value="P:protoporphyrinogen IX biosynthetic process"/>
    <property type="evidence" value="ECO:0007669"/>
    <property type="project" value="UniProtKB-UniPathway"/>
</dbReference>
<dbReference type="CDD" id="cd06454">
    <property type="entry name" value="KBL_like"/>
    <property type="match status" value="1"/>
</dbReference>
<dbReference type="FunFam" id="3.40.640.10:FF:000006">
    <property type="entry name" value="5-aminolevulinate synthase, mitochondrial"/>
    <property type="match status" value="1"/>
</dbReference>
<dbReference type="Gene3D" id="3.90.1150.10">
    <property type="entry name" value="Aspartate Aminotransferase, domain 1"/>
    <property type="match status" value="1"/>
</dbReference>
<dbReference type="Gene3D" id="3.40.640.10">
    <property type="entry name" value="Type I PLP-dependent aspartate aminotransferase-like (Major domain)"/>
    <property type="match status" value="1"/>
</dbReference>
<dbReference type="InterPro" id="IPR010961">
    <property type="entry name" value="4pyrrol_synth_NH2levulA_synth"/>
</dbReference>
<dbReference type="InterPro" id="IPR001917">
    <property type="entry name" value="Aminotrans_II_pyridoxalP_BS"/>
</dbReference>
<dbReference type="InterPro" id="IPR004839">
    <property type="entry name" value="Aminotransferase_I/II_large"/>
</dbReference>
<dbReference type="InterPro" id="IPR050087">
    <property type="entry name" value="AON_synthase_class-II"/>
</dbReference>
<dbReference type="InterPro" id="IPR015424">
    <property type="entry name" value="PyrdxlP-dep_Trfase"/>
</dbReference>
<dbReference type="InterPro" id="IPR015421">
    <property type="entry name" value="PyrdxlP-dep_Trfase_major"/>
</dbReference>
<dbReference type="InterPro" id="IPR015422">
    <property type="entry name" value="PyrdxlP-dep_Trfase_small"/>
</dbReference>
<dbReference type="NCBIfam" id="TIGR01821">
    <property type="entry name" value="5aminolev_synth"/>
    <property type="match status" value="1"/>
</dbReference>
<dbReference type="PANTHER" id="PTHR13693:SF102">
    <property type="entry name" value="2-AMINO-3-KETOBUTYRATE COENZYME A LIGASE, MITOCHONDRIAL"/>
    <property type="match status" value="1"/>
</dbReference>
<dbReference type="PANTHER" id="PTHR13693">
    <property type="entry name" value="CLASS II AMINOTRANSFERASE/8-AMINO-7-OXONONANOATE SYNTHASE"/>
    <property type="match status" value="1"/>
</dbReference>
<dbReference type="Pfam" id="PF00155">
    <property type="entry name" value="Aminotran_1_2"/>
    <property type="match status" value="1"/>
</dbReference>
<dbReference type="SUPFAM" id="SSF53383">
    <property type="entry name" value="PLP-dependent transferases"/>
    <property type="match status" value="1"/>
</dbReference>
<dbReference type="PROSITE" id="PS00599">
    <property type="entry name" value="AA_TRANSFER_CLASS_2"/>
    <property type="match status" value="1"/>
</dbReference>
<name>HEM1_AGABI</name>
<comment type="function">
    <text evidence="1">Catalyzes the synthesis of 5-aminolevulinate (ALA) from succinyl-CoA and glycine, the first and rate-limiting step in heme biosynthesis.</text>
</comment>
<comment type="catalytic activity">
    <reaction evidence="1">
        <text>succinyl-CoA + glycine + H(+) = 5-aminolevulinate + CO2 + CoA</text>
        <dbReference type="Rhea" id="RHEA:12921"/>
        <dbReference type="ChEBI" id="CHEBI:15378"/>
        <dbReference type="ChEBI" id="CHEBI:16526"/>
        <dbReference type="ChEBI" id="CHEBI:57287"/>
        <dbReference type="ChEBI" id="CHEBI:57292"/>
        <dbReference type="ChEBI" id="CHEBI:57305"/>
        <dbReference type="ChEBI" id="CHEBI:356416"/>
        <dbReference type="EC" id="2.3.1.37"/>
    </reaction>
</comment>
<comment type="cofactor">
    <cofactor evidence="1">
        <name>pyridoxal 5'-phosphate</name>
        <dbReference type="ChEBI" id="CHEBI:597326"/>
    </cofactor>
</comment>
<comment type="pathway">
    <text evidence="1">Porphyrin-containing compound metabolism; protoporphyrin-IX biosynthesis; 5-aminolevulinate from glycine: step 1/1.</text>
</comment>
<comment type="subunit">
    <text evidence="1">Homodimer.</text>
</comment>
<comment type="subcellular location">
    <subcellularLocation>
        <location evidence="1">Mitochondrion matrix</location>
    </subcellularLocation>
</comment>
<comment type="similarity">
    <text evidence="4">Belongs to the class-II pyridoxal-phosphate-dependent aminotransferase family.</text>
</comment>
<gene>
    <name type="primary">hem1</name>
</gene>
<evidence type="ECO:0000250" key="1">
    <source>
        <dbReference type="UniProtKB" id="P09950"/>
    </source>
</evidence>
<evidence type="ECO:0000250" key="2">
    <source>
        <dbReference type="UniProtKB" id="P18079"/>
    </source>
</evidence>
<evidence type="ECO:0000256" key="3">
    <source>
        <dbReference type="SAM" id="MobiDB-lite"/>
    </source>
</evidence>
<evidence type="ECO:0000305" key="4"/>
<proteinExistence type="evidence at transcript level"/>
<keyword id="KW-0012">Acyltransferase</keyword>
<keyword id="KW-0350">Heme biosynthesis</keyword>
<keyword id="KW-0496">Mitochondrion</keyword>
<keyword id="KW-0663">Pyridoxal phosphate</keyword>
<keyword id="KW-0808">Transferase</keyword>
<keyword id="KW-0809">Transit peptide</keyword>
<reference key="1">
    <citation type="journal article" date="1997" name="Microbiology">
        <title>Expression of CEL2 and CEL4, two proteins from Agaricus bisporus with similarity to fungal cellobiohydrolase I and beta-mannanase, respectively, is regulated by the carbon source.</title>
        <authorList>
            <person name="Yague E."/>
            <person name="Mehak-Zunic M."/>
            <person name="Morgan L."/>
            <person name="Wood D.A."/>
            <person name="Thurston C.F."/>
        </authorList>
    </citation>
    <scope>NUCLEOTIDE SEQUENCE [MRNA]</scope>
    <source>
        <strain>D649</strain>
    </source>
</reference>
<organism>
    <name type="scientific">Agaricus bisporus</name>
    <name type="common">White button mushroom</name>
    <dbReference type="NCBI Taxonomy" id="5341"/>
    <lineage>
        <taxon>Eukaryota</taxon>
        <taxon>Fungi</taxon>
        <taxon>Dikarya</taxon>
        <taxon>Basidiomycota</taxon>
        <taxon>Agaricomycotina</taxon>
        <taxon>Agaricomycetes</taxon>
        <taxon>Agaricomycetidae</taxon>
        <taxon>Agaricales</taxon>
        <taxon>Agaricineae</taxon>
        <taxon>Agaricaceae</taxon>
        <taxon>Agaricus</taxon>
    </lineage>
</organism>
<sequence length="621" mass="67426">MSHHGPRLSTRSQQIVAGYASVAANFDVEKLHREQGVNIPTSGASINQCPHAAAARAAARMADDLASAARAKKSLDAKGSLAGRPVHHKAATESTKAKHTGFDYEAFYKGELAKKHQDKSYRYFNNINRLARKFPVAHTANPRDEVEVWCSNDYLGMGNNPVVLETMHRTLDKYGHGAGGTRNIAGNGAMHLGLERELRLHRKEAALVFSSCYVANDATLSTLGTKLPGCVIFSDTMNHASMIQGMRHSTPKRVIFKHNDLEDLETKLQQYPKETPKIIAFESVYSMCGSIGPVKEICDLAEQYGAITFLDEVHAVGLYGPRGAGVAEHLDYDAHLAAGSSPDPIPGSVMDRIDIITGTLGKSYGAVGGYIAGSEEFVDMIRSYAPGFIFTTSLPPATVAGARASIVYQSEYLGDRQLKQINVREVKRRLAELDIPVVPGSSHIVPVLVGDAALARAASDKLLSEHDIYVQAINYPTVARGEERLRITVTPRHTMEQMEGLIRSLNQVFEELNINRLSDWKLAGGRAGVGIPGAADDVQPIWTDEQIGLLNGTAPRSLRNAEKSVVDMRAVTIARSRFDVLLGPVYGELQPTEDFDTPAVGATFKAPLVDREVAHDITVSA</sequence>
<accession>Q92403</accession>